<sequence length="121" mass="13558">MVVMRAKDLLGRSGEALAADFLENQGMRIVDRNWRCPDGEIDIVAIDGDTLVVAEVKTRKSLDYGHPFEAVDAAKLARLHRLSSSWCRQHQLNAPRRRIDVVSVIDNGVVEPQLEHLRGVC</sequence>
<organism>
    <name type="scientific">Paenarthrobacter aurescens (strain TC1)</name>
    <dbReference type="NCBI Taxonomy" id="290340"/>
    <lineage>
        <taxon>Bacteria</taxon>
        <taxon>Bacillati</taxon>
        <taxon>Actinomycetota</taxon>
        <taxon>Actinomycetes</taxon>
        <taxon>Micrococcales</taxon>
        <taxon>Micrococcaceae</taxon>
        <taxon>Paenarthrobacter</taxon>
    </lineage>
</organism>
<proteinExistence type="inferred from homology"/>
<protein>
    <recommendedName>
        <fullName evidence="1">UPF0102 protein AAur_2443</fullName>
    </recommendedName>
</protein>
<gene>
    <name type="ordered locus">AAur_2443</name>
</gene>
<accession>A1R7F9</accession>
<evidence type="ECO:0000255" key="1">
    <source>
        <dbReference type="HAMAP-Rule" id="MF_00048"/>
    </source>
</evidence>
<dbReference type="EMBL" id="CP000474">
    <property type="protein sequence ID" value="ABM09335.1"/>
    <property type="molecule type" value="Genomic_DNA"/>
</dbReference>
<dbReference type="SMR" id="A1R7F9"/>
<dbReference type="STRING" id="290340.AAur_2443"/>
<dbReference type="KEGG" id="aau:AAur_2443"/>
<dbReference type="eggNOG" id="COG0792">
    <property type="taxonomic scope" value="Bacteria"/>
</dbReference>
<dbReference type="HOGENOM" id="CLU_115353_2_3_11"/>
<dbReference type="OrthoDB" id="9794876at2"/>
<dbReference type="Proteomes" id="UP000000637">
    <property type="component" value="Chromosome"/>
</dbReference>
<dbReference type="GO" id="GO:0003676">
    <property type="term" value="F:nucleic acid binding"/>
    <property type="evidence" value="ECO:0007669"/>
    <property type="project" value="InterPro"/>
</dbReference>
<dbReference type="CDD" id="cd20736">
    <property type="entry name" value="PoNe_Nuclease"/>
    <property type="match status" value="1"/>
</dbReference>
<dbReference type="Gene3D" id="3.40.1350.10">
    <property type="match status" value="1"/>
</dbReference>
<dbReference type="HAMAP" id="MF_00048">
    <property type="entry name" value="UPF0102"/>
    <property type="match status" value="1"/>
</dbReference>
<dbReference type="InterPro" id="IPR011335">
    <property type="entry name" value="Restrct_endonuc-II-like"/>
</dbReference>
<dbReference type="InterPro" id="IPR011856">
    <property type="entry name" value="tRNA_endonuc-like_dom_sf"/>
</dbReference>
<dbReference type="InterPro" id="IPR003509">
    <property type="entry name" value="UPF0102_YraN-like"/>
</dbReference>
<dbReference type="NCBIfam" id="NF009150">
    <property type="entry name" value="PRK12497.1-3"/>
    <property type="match status" value="1"/>
</dbReference>
<dbReference type="NCBIfam" id="NF009154">
    <property type="entry name" value="PRK12497.3-3"/>
    <property type="match status" value="1"/>
</dbReference>
<dbReference type="PANTHER" id="PTHR34039">
    <property type="entry name" value="UPF0102 PROTEIN YRAN"/>
    <property type="match status" value="1"/>
</dbReference>
<dbReference type="PANTHER" id="PTHR34039:SF1">
    <property type="entry name" value="UPF0102 PROTEIN YRAN"/>
    <property type="match status" value="1"/>
</dbReference>
<dbReference type="Pfam" id="PF02021">
    <property type="entry name" value="UPF0102"/>
    <property type="match status" value="1"/>
</dbReference>
<dbReference type="SUPFAM" id="SSF52980">
    <property type="entry name" value="Restriction endonuclease-like"/>
    <property type="match status" value="1"/>
</dbReference>
<name>Y2443_PAEAT</name>
<comment type="similarity">
    <text evidence="1">Belongs to the UPF0102 family.</text>
</comment>
<reference key="1">
    <citation type="journal article" date="2006" name="PLoS Genet.">
        <title>Secrets of soil survival revealed by the genome sequence of Arthrobacter aurescens TC1.</title>
        <authorList>
            <person name="Mongodin E.F."/>
            <person name="Shapir N."/>
            <person name="Daugherty S.C."/>
            <person name="DeBoy R.T."/>
            <person name="Emerson J.B."/>
            <person name="Shvartzbeyn A."/>
            <person name="Radune D."/>
            <person name="Vamathevan J."/>
            <person name="Riggs F."/>
            <person name="Grinberg V."/>
            <person name="Khouri H.M."/>
            <person name="Wackett L.P."/>
            <person name="Nelson K.E."/>
            <person name="Sadowsky M.J."/>
        </authorList>
    </citation>
    <scope>NUCLEOTIDE SEQUENCE [LARGE SCALE GENOMIC DNA]</scope>
    <source>
        <strain>TC1</strain>
    </source>
</reference>
<feature type="chain" id="PRO_0000336123" description="UPF0102 protein AAur_2443">
    <location>
        <begin position="1"/>
        <end position="121"/>
    </location>
</feature>